<dbReference type="EMBL" id="CP001488">
    <property type="protein sequence ID" value="ACO00584.1"/>
    <property type="molecule type" value="Genomic_DNA"/>
</dbReference>
<dbReference type="RefSeq" id="WP_004686487.1">
    <property type="nucleotide sequence ID" value="NC_012441.1"/>
</dbReference>
<dbReference type="SMR" id="C0RIC6"/>
<dbReference type="KEGG" id="bmi:BMEA_A0829"/>
<dbReference type="HOGENOM" id="CLU_082184_2_0_5"/>
<dbReference type="Proteomes" id="UP000001748">
    <property type="component" value="Chromosome I"/>
</dbReference>
<dbReference type="GO" id="GO:0022625">
    <property type="term" value="C:cytosolic large ribosomal subunit"/>
    <property type="evidence" value="ECO:0007669"/>
    <property type="project" value="TreeGrafter"/>
</dbReference>
<dbReference type="GO" id="GO:0003729">
    <property type="term" value="F:mRNA binding"/>
    <property type="evidence" value="ECO:0007669"/>
    <property type="project" value="TreeGrafter"/>
</dbReference>
<dbReference type="GO" id="GO:0003735">
    <property type="term" value="F:structural constituent of ribosome"/>
    <property type="evidence" value="ECO:0007669"/>
    <property type="project" value="InterPro"/>
</dbReference>
<dbReference type="GO" id="GO:0017148">
    <property type="term" value="P:negative regulation of translation"/>
    <property type="evidence" value="ECO:0007669"/>
    <property type="project" value="TreeGrafter"/>
</dbReference>
<dbReference type="GO" id="GO:0006412">
    <property type="term" value="P:translation"/>
    <property type="evidence" value="ECO:0007669"/>
    <property type="project" value="UniProtKB-UniRule"/>
</dbReference>
<dbReference type="CDD" id="cd00392">
    <property type="entry name" value="Ribosomal_L13"/>
    <property type="match status" value="1"/>
</dbReference>
<dbReference type="FunFam" id="3.90.1180.10:FF:000001">
    <property type="entry name" value="50S ribosomal protein L13"/>
    <property type="match status" value="1"/>
</dbReference>
<dbReference type="Gene3D" id="3.90.1180.10">
    <property type="entry name" value="Ribosomal protein L13"/>
    <property type="match status" value="1"/>
</dbReference>
<dbReference type="HAMAP" id="MF_01366">
    <property type="entry name" value="Ribosomal_uL13"/>
    <property type="match status" value="1"/>
</dbReference>
<dbReference type="InterPro" id="IPR005822">
    <property type="entry name" value="Ribosomal_uL13"/>
</dbReference>
<dbReference type="InterPro" id="IPR005823">
    <property type="entry name" value="Ribosomal_uL13_bac-type"/>
</dbReference>
<dbReference type="InterPro" id="IPR036899">
    <property type="entry name" value="Ribosomal_uL13_sf"/>
</dbReference>
<dbReference type="NCBIfam" id="TIGR01066">
    <property type="entry name" value="rplM_bact"/>
    <property type="match status" value="1"/>
</dbReference>
<dbReference type="PANTHER" id="PTHR11545:SF2">
    <property type="entry name" value="LARGE RIBOSOMAL SUBUNIT PROTEIN UL13M"/>
    <property type="match status" value="1"/>
</dbReference>
<dbReference type="PANTHER" id="PTHR11545">
    <property type="entry name" value="RIBOSOMAL PROTEIN L13"/>
    <property type="match status" value="1"/>
</dbReference>
<dbReference type="Pfam" id="PF00572">
    <property type="entry name" value="Ribosomal_L13"/>
    <property type="match status" value="1"/>
</dbReference>
<dbReference type="PIRSF" id="PIRSF002181">
    <property type="entry name" value="Ribosomal_L13"/>
    <property type="match status" value="1"/>
</dbReference>
<dbReference type="SUPFAM" id="SSF52161">
    <property type="entry name" value="Ribosomal protein L13"/>
    <property type="match status" value="1"/>
</dbReference>
<reference key="1">
    <citation type="submission" date="2009-03" db="EMBL/GenBank/DDBJ databases">
        <title>Brucella melitensis ATCC 23457 whole genome shotgun sequencing project.</title>
        <authorList>
            <person name="Setubal J.C."/>
            <person name="Boyle S."/>
            <person name="Crasta O.R."/>
            <person name="Gillespie J.J."/>
            <person name="Kenyon R.W."/>
            <person name="Lu J."/>
            <person name="Mane S."/>
            <person name="Nagrani S."/>
            <person name="Shallom J.M."/>
            <person name="Shallom S."/>
            <person name="Shukla M."/>
            <person name="Snyder E.E."/>
            <person name="Sobral B.W."/>
            <person name="Wattam A.R."/>
            <person name="Will R."/>
            <person name="Williams K."/>
            <person name="Yoo H."/>
            <person name="Munk C."/>
            <person name="Tapia R."/>
            <person name="Han C."/>
            <person name="Detter J.C."/>
            <person name="Bruce D."/>
            <person name="Brettin T.S."/>
        </authorList>
    </citation>
    <scope>NUCLEOTIDE SEQUENCE [LARGE SCALE GENOMIC DNA]</scope>
    <source>
        <strain>ATCC 23457</strain>
    </source>
</reference>
<comment type="function">
    <text evidence="1">This protein is one of the early assembly proteins of the 50S ribosomal subunit, although it is not seen to bind rRNA by itself. It is important during the early stages of 50S assembly.</text>
</comment>
<comment type="subunit">
    <text evidence="1">Part of the 50S ribosomal subunit.</text>
</comment>
<comment type="similarity">
    <text evidence="1">Belongs to the universal ribosomal protein uL13 family.</text>
</comment>
<keyword id="KW-0687">Ribonucleoprotein</keyword>
<keyword id="KW-0689">Ribosomal protein</keyword>
<feature type="chain" id="PRO_1000166855" description="Large ribosomal subunit protein uL13">
    <location>
        <begin position="1"/>
        <end position="154"/>
    </location>
</feature>
<gene>
    <name evidence="1" type="primary">rplM</name>
    <name type="ordered locus">BMEA_A0829</name>
</gene>
<accession>C0RIC6</accession>
<organism>
    <name type="scientific">Brucella melitensis biotype 2 (strain ATCC 23457)</name>
    <dbReference type="NCBI Taxonomy" id="546272"/>
    <lineage>
        <taxon>Bacteria</taxon>
        <taxon>Pseudomonadati</taxon>
        <taxon>Pseudomonadota</taxon>
        <taxon>Alphaproteobacteria</taxon>
        <taxon>Hyphomicrobiales</taxon>
        <taxon>Brucellaceae</taxon>
        <taxon>Brucella/Ochrobactrum group</taxon>
        <taxon>Brucella</taxon>
    </lineage>
</organism>
<proteinExistence type="inferred from homology"/>
<name>RL13_BRUMB</name>
<evidence type="ECO:0000255" key="1">
    <source>
        <dbReference type="HAMAP-Rule" id="MF_01366"/>
    </source>
</evidence>
<evidence type="ECO:0000305" key="2"/>
<sequence length="154" mass="17329">MATFSQKPAEVVKKWVLIDAEGLVVGRLASLVANRLRGKHKATFTPHVDDGDNVIIINADKVVLTGKKYTDKKYYWHTGHPGGIKERTARQILEGRFPERVLEKAIERMIPRGPLGRRQMKNLRVNVGPNHQHEAQQPEVLDVAALNRKNKGNA</sequence>
<protein>
    <recommendedName>
        <fullName evidence="1">Large ribosomal subunit protein uL13</fullName>
    </recommendedName>
    <alternativeName>
        <fullName evidence="2">50S ribosomal protein L13</fullName>
    </alternativeName>
</protein>